<feature type="chain" id="PRO_1000093910" description="Holo-[acyl-carrier-protein] synthase">
    <location>
        <begin position="1"/>
        <end position="126"/>
    </location>
</feature>
<feature type="binding site" evidence="1">
    <location>
        <position position="9"/>
    </location>
    <ligand>
        <name>Mg(2+)</name>
        <dbReference type="ChEBI" id="CHEBI:18420"/>
    </ligand>
</feature>
<feature type="binding site" evidence="1">
    <location>
        <position position="58"/>
    </location>
    <ligand>
        <name>Mg(2+)</name>
        <dbReference type="ChEBI" id="CHEBI:18420"/>
    </ligand>
</feature>
<evidence type="ECO:0000255" key="1">
    <source>
        <dbReference type="HAMAP-Rule" id="MF_00101"/>
    </source>
</evidence>
<dbReference type="EC" id="2.7.8.7" evidence="1"/>
<dbReference type="EMBL" id="CP001138">
    <property type="protein sequence ID" value="ACH50922.1"/>
    <property type="molecule type" value="Genomic_DNA"/>
</dbReference>
<dbReference type="RefSeq" id="WP_000986043.1">
    <property type="nucleotide sequence ID" value="NC_011149.1"/>
</dbReference>
<dbReference type="SMR" id="B5F1F7"/>
<dbReference type="GeneID" id="66757004"/>
<dbReference type="KEGG" id="sea:SeAg_B2739"/>
<dbReference type="HOGENOM" id="CLU_089696_3_1_6"/>
<dbReference type="Proteomes" id="UP000008819">
    <property type="component" value="Chromosome"/>
</dbReference>
<dbReference type="GO" id="GO:0005737">
    <property type="term" value="C:cytoplasm"/>
    <property type="evidence" value="ECO:0007669"/>
    <property type="project" value="UniProtKB-SubCell"/>
</dbReference>
<dbReference type="GO" id="GO:0008897">
    <property type="term" value="F:holo-[acyl-carrier-protein] synthase activity"/>
    <property type="evidence" value="ECO:0007669"/>
    <property type="project" value="UniProtKB-UniRule"/>
</dbReference>
<dbReference type="GO" id="GO:0000287">
    <property type="term" value="F:magnesium ion binding"/>
    <property type="evidence" value="ECO:0007669"/>
    <property type="project" value="UniProtKB-UniRule"/>
</dbReference>
<dbReference type="GO" id="GO:0006633">
    <property type="term" value="P:fatty acid biosynthetic process"/>
    <property type="evidence" value="ECO:0007669"/>
    <property type="project" value="UniProtKB-UniRule"/>
</dbReference>
<dbReference type="FunFam" id="3.90.470.20:FF:000001">
    <property type="entry name" value="Holo-[acyl-carrier-protein] synthase"/>
    <property type="match status" value="1"/>
</dbReference>
<dbReference type="Gene3D" id="3.90.470.20">
    <property type="entry name" value="4'-phosphopantetheinyl transferase domain"/>
    <property type="match status" value="1"/>
</dbReference>
<dbReference type="HAMAP" id="MF_00101">
    <property type="entry name" value="AcpS"/>
    <property type="match status" value="1"/>
</dbReference>
<dbReference type="InterPro" id="IPR008278">
    <property type="entry name" value="4-PPantetheinyl_Trfase_dom"/>
</dbReference>
<dbReference type="InterPro" id="IPR037143">
    <property type="entry name" value="4-PPantetheinyl_Trfase_dom_sf"/>
</dbReference>
<dbReference type="InterPro" id="IPR002582">
    <property type="entry name" value="ACPS"/>
</dbReference>
<dbReference type="InterPro" id="IPR004568">
    <property type="entry name" value="Ppantetheine-prot_Trfase_dom"/>
</dbReference>
<dbReference type="NCBIfam" id="TIGR00516">
    <property type="entry name" value="acpS"/>
    <property type="match status" value="1"/>
</dbReference>
<dbReference type="NCBIfam" id="TIGR00556">
    <property type="entry name" value="pantethn_trn"/>
    <property type="match status" value="1"/>
</dbReference>
<dbReference type="Pfam" id="PF01648">
    <property type="entry name" value="ACPS"/>
    <property type="match status" value="1"/>
</dbReference>
<dbReference type="SUPFAM" id="SSF56214">
    <property type="entry name" value="4'-phosphopantetheinyl transferase"/>
    <property type="match status" value="1"/>
</dbReference>
<comment type="function">
    <text evidence="1">Transfers the 4'-phosphopantetheine moiety from coenzyme A to a Ser of acyl-carrier-protein.</text>
</comment>
<comment type="catalytic activity">
    <reaction evidence="1">
        <text>apo-[ACP] + CoA = holo-[ACP] + adenosine 3',5'-bisphosphate + H(+)</text>
        <dbReference type="Rhea" id="RHEA:12068"/>
        <dbReference type="Rhea" id="RHEA-COMP:9685"/>
        <dbReference type="Rhea" id="RHEA-COMP:9690"/>
        <dbReference type="ChEBI" id="CHEBI:15378"/>
        <dbReference type="ChEBI" id="CHEBI:29999"/>
        <dbReference type="ChEBI" id="CHEBI:57287"/>
        <dbReference type="ChEBI" id="CHEBI:58343"/>
        <dbReference type="ChEBI" id="CHEBI:64479"/>
        <dbReference type="EC" id="2.7.8.7"/>
    </reaction>
</comment>
<comment type="cofactor">
    <cofactor evidence="1">
        <name>Mg(2+)</name>
        <dbReference type="ChEBI" id="CHEBI:18420"/>
    </cofactor>
</comment>
<comment type="subcellular location">
    <subcellularLocation>
        <location evidence="1">Cytoplasm</location>
    </subcellularLocation>
</comment>
<comment type="similarity">
    <text evidence="1">Belongs to the P-Pant transferase superfamily. AcpS family.</text>
</comment>
<reference key="1">
    <citation type="journal article" date="2011" name="J. Bacteriol.">
        <title>Comparative genomics of 28 Salmonella enterica isolates: evidence for CRISPR-mediated adaptive sublineage evolution.</title>
        <authorList>
            <person name="Fricke W.F."/>
            <person name="Mammel M.K."/>
            <person name="McDermott P.F."/>
            <person name="Tartera C."/>
            <person name="White D.G."/>
            <person name="Leclerc J.E."/>
            <person name="Ravel J."/>
            <person name="Cebula T.A."/>
        </authorList>
    </citation>
    <scope>NUCLEOTIDE SEQUENCE [LARGE SCALE GENOMIC DNA]</scope>
    <source>
        <strain>SL483</strain>
    </source>
</reference>
<protein>
    <recommendedName>
        <fullName evidence="1">Holo-[acyl-carrier-protein] synthase</fullName>
        <shortName evidence="1">Holo-ACP synthase</shortName>
        <ecNumber evidence="1">2.7.8.7</ecNumber>
    </recommendedName>
    <alternativeName>
        <fullName evidence="1">4'-phosphopantetheinyl transferase AcpS</fullName>
    </alternativeName>
</protein>
<proteinExistence type="inferred from homology"/>
<gene>
    <name evidence="1" type="primary">acpS</name>
    <name type="ordered locus">SeAg_B2739</name>
</gene>
<keyword id="KW-0963">Cytoplasm</keyword>
<keyword id="KW-0275">Fatty acid biosynthesis</keyword>
<keyword id="KW-0276">Fatty acid metabolism</keyword>
<keyword id="KW-0444">Lipid biosynthesis</keyword>
<keyword id="KW-0443">Lipid metabolism</keyword>
<keyword id="KW-0460">Magnesium</keyword>
<keyword id="KW-0479">Metal-binding</keyword>
<keyword id="KW-0808">Transferase</keyword>
<accession>B5F1F7</accession>
<name>ACPS_SALA4</name>
<organism>
    <name type="scientific">Salmonella agona (strain SL483)</name>
    <dbReference type="NCBI Taxonomy" id="454166"/>
    <lineage>
        <taxon>Bacteria</taxon>
        <taxon>Pseudomonadati</taxon>
        <taxon>Pseudomonadota</taxon>
        <taxon>Gammaproteobacteria</taxon>
        <taxon>Enterobacterales</taxon>
        <taxon>Enterobacteriaceae</taxon>
        <taxon>Salmonella</taxon>
    </lineage>
</organism>
<sequence>MAILGLGTDIVEIARIEAVISRSGERLARRVLSDNEWAIWETHQQPVRFLAKRFAVKEAAAKAFGTGIRNGLAFNQFEVFNDELGKPRLRLWGEALTLAEKLGVAHMHVTLADERHYACATVILES</sequence>